<feature type="chain" id="PRO_0000382525" description="Probable cytosolic iron-sulfur protein assembly protein 1">
    <location>
        <begin position="1"/>
        <end position="361"/>
    </location>
</feature>
<feature type="repeat" description="WD 1">
    <location>
        <begin position="10"/>
        <end position="49"/>
    </location>
</feature>
<feature type="repeat" description="WD 2">
    <location>
        <begin position="56"/>
        <end position="105"/>
    </location>
</feature>
<feature type="repeat" description="WD 3">
    <location>
        <begin position="120"/>
        <end position="160"/>
    </location>
</feature>
<feature type="repeat" description="WD 4">
    <location>
        <begin position="167"/>
        <end position="206"/>
    </location>
</feature>
<feature type="repeat" description="WD 5">
    <location>
        <begin position="213"/>
        <end position="265"/>
    </location>
</feature>
<feature type="repeat" description="WD 6">
    <location>
        <begin position="280"/>
        <end position="319"/>
    </location>
</feature>
<feature type="repeat" description="WD 7">
    <location>
        <begin position="327"/>
        <end position="361"/>
    </location>
</feature>
<gene>
    <name evidence="1" type="primary">CIA1</name>
    <name type="ORF">PICST_60492</name>
</gene>
<name>CIAO1_PICST</name>
<reference key="1">
    <citation type="journal article" date="2007" name="Nat. Biotechnol.">
        <title>Genome sequence of the lignocellulose-bioconverting and xylose-fermenting yeast Pichia stipitis.</title>
        <authorList>
            <person name="Jeffries T.W."/>
            <person name="Grigoriev I.V."/>
            <person name="Grimwood J."/>
            <person name="Laplaza J.M."/>
            <person name="Aerts A."/>
            <person name="Salamov A."/>
            <person name="Schmutz J."/>
            <person name="Lindquist E."/>
            <person name="Dehal P."/>
            <person name="Shapiro H."/>
            <person name="Jin Y.-S."/>
            <person name="Passoth V."/>
            <person name="Richardson P.M."/>
        </authorList>
    </citation>
    <scope>NUCLEOTIDE SEQUENCE [LARGE SCALE GENOMIC DNA]</scope>
    <source>
        <strain>ATCC 58785 / CBS 6054 / NBRC 10063 / NRRL Y-11545</strain>
    </source>
</reference>
<comment type="function">
    <text evidence="1">Essential component of the cytosolic iron-sulfur (Fe/S) protein assembly machinery. Required for the maturation of extramitochondrial Fe/S proteins.</text>
</comment>
<comment type="subunit">
    <text evidence="1">Interacts with NAR1.</text>
</comment>
<comment type="subcellular location">
    <subcellularLocation>
        <location evidence="1">Cytoplasm</location>
    </subcellularLocation>
    <subcellularLocation>
        <location evidence="1">Nucleus</location>
    </subcellularLocation>
    <text evidence="1">Preferentially localized to the nucleus.</text>
</comment>
<comment type="similarity">
    <text evidence="1">Belongs to the WD repeat CIA1 family.</text>
</comment>
<keyword id="KW-0963">Cytoplasm</keyword>
<keyword id="KW-0539">Nucleus</keyword>
<keyword id="KW-1185">Reference proteome</keyword>
<keyword id="KW-0677">Repeat</keyword>
<keyword id="KW-0853">WD repeat</keyword>
<sequence length="361" mass="40534">MVSLIKSIKAHSDKAWSVSAHKTVPLLATASTDKTSKIYKLSVKQNFPQVAQLEDTHKRSVRAVSFKPPLPGVESNFLDLPALASGSFDSTISIWGIDEPETEILSSPRNEWNLMAIIEGHENEIKAVGWNHNGSLLASCSRDKTVWIWETDPETLEEFECISVLNDHQHDIKHVVWHPHQNLLASSSYDDTIRLYKQDLDDDDWSCVGVLNGHEGTVWCSQFEDNHRHQESNESSNRSKIRLVSVSDDMTARIWSKYIPSSIKHKSEMVWEQESILPPVHQYPIYSVAWSAQSGKIATVGSDGKIVIYIEGDDNSWSIDSVKESAHGVHEINSIIWALLDDQSEVLVTAGDDGCVNIWKP</sequence>
<evidence type="ECO:0000255" key="1">
    <source>
        <dbReference type="HAMAP-Rule" id="MF_03037"/>
    </source>
</evidence>
<accession>A3LVM1</accession>
<proteinExistence type="inferred from homology"/>
<organism>
    <name type="scientific">Scheffersomyces stipitis (strain ATCC 58785 / CBS 6054 / NBRC 10063 / NRRL Y-11545)</name>
    <name type="common">Yeast</name>
    <name type="synonym">Pichia stipitis</name>
    <dbReference type="NCBI Taxonomy" id="322104"/>
    <lineage>
        <taxon>Eukaryota</taxon>
        <taxon>Fungi</taxon>
        <taxon>Dikarya</taxon>
        <taxon>Ascomycota</taxon>
        <taxon>Saccharomycotina</taxon>
        <taxon>Pichiomycetes</taxon>
        <taxon>Debaryomycetaceae</taxon>
        <taxon>Scheffersomyces</taxon>
    </lineage>
</organism>
<dbReference type="EMBL" id="CP000499">
    <property type="protein sequence ID" value="ABN67145.2"/>
    <property type="molecule type" value="Genomic_DNA"/>
</dbReference>
<dbReference type="RefSeq" id="XP_001385174.2">
    <property type="nucleotide sequence ID" value="XM_001385137.1"/>
</dbReference>
<dbReference type="SMR" id="A3LVM1"/>
<dbReference type="FunCoup" id="A3LVM1">
    <property type="interactions" value="72"/>
</dbReference>
<dbReference type="STRING" id="322104.A3LVM1"/>
<dbReference type="GeneID" id="4839450"/>
<dbReference type="KEGG" id="pic:PICST_60492"/>
<dbReference type="eggNOG" id="KOG0645">
    <property type="taxonomic scope" value="Eukaryota"/>
</dbReference>
<dbReference type="HOGENOM" id="CLU_000288_57_8_1"/>
<dbReference type="InParanoid" id="A3LVM1"/>
<dbReference type="OMA" id="IREIRWS"/>
<dbReference type="OrthoDB" id="284782at2759"/>
<dbReference type="Proteomes" id="UP000002258">
    <property type="component" value="Chromosome 5"/>
</dbReference>
<dbReference type="GO" id="GO:0097361">
    <property type="term" value="C:cytosolic [4Fe-4S] assembly targeting complex"/>
    <property type="evidence" value="ECO:0007669"/>
    <property type="project" value="EnsemblFungi"/>
</dbReference>
<dbReference type="GO" id="GO:0005634">
    <property type="term" value="C:nucleus"/>
    <property type="evidence" value="ECO:0007669"/>
    <property type="project" value="UniProtKB-SubCell"/>
</dbReference>
<dbReference type="GO" id="GO:0016226">
    <property type="term" value="P:iron-sulfur cluster assembly"/>
    <property type="evidence" value="ECO:0007669"/>
    <property type="project" value="UniProtKB-UniRule"/>
</dbReference>
<dbReference type="GO" id="GO:0002098">
    <property type="term" value="P:tRNA wobble uridine modification"/>
    <property type="evidence" value="ECO:0007669"/>
    <property type="project" value="EnsemblFungi"/>
</dbReference>
<dbReference type="CDD" id="cd00200">
    <property type="entry name" value="WD40"/>
    <property type="match status" value="1"/>
</dbReference>
<dbReference type="Gene3D" id="2.130.10.10">
    <property type="entry name" value="YVTN repeat-like/Quinoprotein amine dehydrogenase"/>
    <property type="match status" value="1"/>
</dbReference>
<dbReference type="HAMAP" id="MF_03037">
    <property type="entry name" value="ciao1"/>
    <property type="match status" value="1"/>
</dbReference>
<dbReference type="InterPro" id="IPR028608">
    <property type="entry name" value="CIAO1/Cia1"/>
</dbReference>
<dbReference type="InterPro" id="IPR020472">
    <property type="entry name" value="G-protein_beta_WD-40_rep"/>
</dbReference>
<dbReference type="InterPro" id="IPR015943">
    <property type="entry name" value="WD40/YVTN_repeat-like_dom_sf"/>
</dbReference>
<dbReference type="InterPro" id="IPR036322">
    <property type="entry name" value="WD40_repeat_dom_sf"/>
</dbReference>
<dbReference type="InterPro" id="IPR001680">
    <property type="entry name" value="WD40_rpt"/>
</dbReference>
<dbReference type="PANTHER" id="PTHR19920:SF0">
    <property type="entry name" value="CYTOSOLIC IRON-SULFUR PROTEIN ASSEMBLY PROTEIN CIAO1-RELATED"/>
    <property type="match status" value="1"/>
</dbReference>
<dbReference type="PANTHER" id="PTHR19920">
    <property type="entry name" value="WD40 PROTEIN CIAO1"/>
    <property type="match status" value="1"/>
</dbReference>
<dbReference type="Pfam" id="PF00400">
    <property type="entry name" value="WD40"/>
    <property type="match status" value="7"/>
</dbReference>
<dbReference type="PRINTS" id="PR00320">
    <property type="entry name" value="GPROTEINBRPT"/>
</dbReference>
<dbReference type="SMART" id="SM00320">
    <property type="entry name" value="WD40"/>
    <property type="match status" value="7"/>
</dbReference>
<dbReference type="SUPFAM" id="SSF50978">
    <property type="entry name" value="WD40 repeat-like"/>
    <property type="match status" value="1"/>
</dbReference>
<dbReference type="PROSITE" id="PS00678">
    <property type="entry name" value="WD_REPEATS_1"/>
    <property type="match status" value="1"/>
</dbReference>
<dbReference type="PROSITE" id="PS50082">
    <property type="entry name" value="WD_REPEATS_2"/>
    <property type="match status" value="2"/>
</dbReference>
<dbReference type="PROSITE" id="PS50294">
    <property type="entry name" value="WD_REPEATS_REGION"/>
    <property type="match status" value="1"/>
</dbReference>
<protein>
    <recommendedName>
        <fullName evidence="1">Probable cytosolic iron-sulfur protein assembly protein 1</fullName>
    </recommendedName>
</protein>